<evidence type="ECO:0000255" key="1">
    <source>
        <dbReference type="HAMAP-Rule" id="MF_00127"/>
    </source>
</evidence>
<proteinExistence type="inferred from homology"/>
<organism>
    <name type="scientific">Streptococcus pneumoniae (strain JJA)</name>
    <dbReference type="NCBI Taxonomy" id="488222"/>
    <lineage>
        <taxon>Bacteria</taxon>
        <taxon>Bacillati</taxon>
        <taxon>Bacillota</taxon>
        <taxon>Bacilli</taxon>
        <taxon>Lactobacillales</taxon>
        <taxon>Streptococcaceae</taxon>
        <taxon>Streptococcus</taxon>
    </lineage>
</organism>
<feature type="chain" id="PRO_1000199156" description="Histidine--tRNA ligase">
    <location>
        <begin position="1"/>
        <end position="429"/>
    </location>
</feature>
<sequence>MKLQKPKGTQDILPAESAKWQYVEGFAREIFKRYNYAEVRTPIFEHYEVISRSVGDTTDIVTKEMYDFYDKGDRHITLRPEGTAPVVRSYVENKLFAPEVQKPSKFYYMGPMFRYERPQAGRLRQFHQIGVECFGSSNPATDVETISMAAYFLKEIGIQGVKLHLNTLGNPESRAAYRQALIDYLTPLKETLSKDSQRRLEENPLRVLDSKEKEDKVAVENAPSILDFLDEESQTHFDAVRQMLENLGVDYIIDTNMVRGLDYYNHTIFEFITEIEGNDLTVCAGGRYDGLVAYFGGPETAGFGFGLGVERLLLILEKQGVALPIENALDVYIAVLGDGANVKALELVQALRQQGFKAERDYLNRKLKAQFKSADVFAAKTLITLGESEVESGQVTVKNNQTREEVQVSLETISQNFSEIFEKLGFYTQ</sequence>
<keyword id="KW-0030">Aminoacyl-tRNA synthetase</keyword>
<keyword id="KW-0067">ATP-binding</keyword>
<keyword id="KW-0963">Cytoplasm</keyword>
<keyword id="KW-0436">Ligase</keyword>
<keyword id="KW-0547">Nucleotide-binding</keyword>
<keyword id="KW-0648">Protein biosynthesis</keyword>
<comment type="catalytic activity">
    <reaction evidence="1">
        <text>tRNA(His) + L-histidine + ATP = L-histidyl-tRNA(His) + AMP + diphosphate + H(+)</text>
        <dbReference type="Rhea" id="RHEA:17313"/>
        <dbReference type="Rhea" id="RHEA-COMP:9665"/>
        <dbReference type="Rhea" id="RHEA-COMP:9689"/>
        <dbReference type="ChEBI" id="CHEBI:15378"/>
        <dbReference type="ChEBI" id="CHEBI:30616"/>
        <dbReference type="ChEBI" id="CHEBI:33019"/>
        <dbReference type="ChEBI" id="CHEBI:57595"/>
        <dbReference type="ChEBI" id="CHEBI:78442"/>
        <dbReference type="ChEBI" id="CHEBI:78527"/>
        <dbReference type="ChEBI" id="CHEBI:456215"/>
        <dbReference type="EC" id="6.1.1.21"/>
    </reaction>
</comment>
<comment type="subunit">
    <text evidence="1">Homodimer.</text>
</comment>
<comment type="subcellular location">
    <subcellularLocation>
        <location evidence="1">Cytoplasm</location>
    </subcellularLocation>
</comment>
<comment type="similarity">
    <text evidence="1">Belongs to the class-II aminoacyl-tRNA synthetase family.</text>
</comment>
<protein>
    <recommendedName>
        <fullName evidence="1">Histidine--tRNA ligase</fullName>
        <ecNumber evidence="1">6.1.1.21</ecNumber>
    </recommendedName>
    <alternativeName>
        <fullName evidence="1">Histidyl-tRNA synthetase</fullName>
        <shortName evidence="1">HisRS</shortName>
    </alternativeName>
</protein>
<name>SYH_STRZJ</name>
<gene>
    <name evidence="1" type="primary">hisS</name>
    <name type="ordered locus">SPJ_2144</name>
</gene>
<accession>C1CH52</accession>
<reference key="1">
    <citation type="journal article" date="2010" name="Genome Biol.">
        <title>Structure and dynamics of the pan-genome of Streptococcus pneumoniae and closely related species.</title>
        <authorList>
            <person name="Donati C."/>
            <person name="Hiller N.L."/>
            <person name="Tettelin H."/>
            <person name="Muzzi A."/>
            <person name="Croucher N.J."/>
            <person name="Angiuoli S.V."/>
            <person name="Oggioni M."/>
            <person name="Dunning Hotopp J.C."/>
            <person name="Hu F.Z."/>
            <person name="Riley D.R."/>
            <person name="Covacci A."/>
            <person name="Mitchell T.J."/>
            <person name="Bentley S.D."/>
            <person name="Kilian M."/>
            <person name="Ehrlich G.D."/>
            <person name="Rappuoli R."/>
            <person name="Moxon E.R."/>
            <person name="Masignani V."/>
        </authorList>
    </citation>
    <scope>NUCLEOTIDE SEQUENCE [LARGE SCALE GENOMIC DNA]</scope>
    <source>
        <strain>JJA</strain>
    </source>
</reference>
<dbReference type="EC" id="6.1.1.21" evidence="1"/>
<dbReference type="EMBL" id="CP000919">
    <property type="protein sequence ID" value="ACO18236.1"/>
    <property type="molecule type" value="Genomic_DNA"/>
</dbReference>
<dbReference type="RefSeq" id="WP_000775882.1">
    <property type="nucleotide sequence ID" value="NC_012466.1"/>
</dbReference>
<dbReference type="SMR" id="C1CH52"/>
<dbReference type="KEGG" id="sjj:SPJ_2144"/>
<dbReference type="HOGENOM" id="CLU_025113_1_1_9"/>
<dbReference type="Proteomes" id="UP000002206">
    <property type="component" value="Chromosome"/>
</dbReference>
<dbReference type="GO" id="GO:0005737">
    <property type="term" value="C:cytoplasm"/>
    <property type="evidence" value="ECO:0007669"/>
    <property type="project" value="UniProtKB-SubCell"/>
</dbReference>
<dbReference type="GO" id="GO:0005524">
    <property type="term" value="F:ATP binding"/>
    <property type="evidence" value="ECO:0007669"/>
    <property type="project" value="UniProtKB-UniRule"/>
</dbReference>
<dbReference type="GO" id="GO:0140096">
    <property type="term" value="F:catalytic activity, acting on a protein"/>
    <property type="evidence" value="ECO:0007669"/>
    <property type="project" value="UniProtKB-ARBA"/>
</dbReference>
<dbReference type="GO" id="GO:0004821">
    <property type="term" value="F:histidine-tRNA ligase activity"/>
    <property type="evidence" value="ECO:0007669"/>
    <property type="project" value="UniProtKB-UniRule"/>
</dbReference>
<dbReference type="GO" id="GO:0016740">
    <property type="term" value="F:transferase activity"/>
    <property type="evidence" value="ECO:0007669"/>
    <property type="project" value="UniProtKB-ARBA"/>
</dbReference>
<dbReference type="GO" id="GO:0006427">
    <property type="term" value="P:histidyl-tRNA aminoacylation"/>
    <property type="evidence" value="ECO:0007669"/>
    <property type="project" value="UniProtKB-UniRule"/>
</dbReference>
<dbReference type="CDD" id="cd00773">
    <property type="entry name" value="HisRS-like_core"/>
    <property type="match status" value="1"/>
</dbReference>
<dbReference type="CDD" id="cd00859">
    <property type="entry name" value="HisRS_anticodon"/>
    <property type="match status" value="1"/>
</dbReference>
<dbReference type="FunFam" id="3.30.930.10:FF:000005">
    <property type="entry name" value="Histidine--tRNA ligase"/>
    <property type="match status" value="1"/>
</dbReference>
<dbReference type="FunFam" id="3.40.50.800:FF:000022">
    <property type="entry name" value="Histidine--tRNA ligase"/>
    <property type="match status" value="1"/>
</dbReference>
<dbReference type="Gene3D" id="3.40.50.800">
    <property type="entry name" value="Anticodon-binding domain"/>
    <property type="match status" value="1"/>
</dbReference>
<dbReference type="Gene3D" id="3.30.930.10">
    <property type="entry name" value="Bira Bifunctional Protein, Domain 2"/>
    <property type="match status" value="1"/>
</dbReference>
<dbReference type="HAMAP" id="MF_00127">
    <property type="entry name" value="His_tRNA_synth"/>
    <property type="match status" value="1"/>
</dbReference>
<dbReference type="InterPro" id="IPR006195">
    <property type="entry name" value="aa-tRNA-synth_II"/>
</dbReference>
<dbReference type="InterPro" id="IPR045864">
    <property type="entry name" value="aa-tRNA-synth_II/BPL/LPL"/>
</dbReference>
<dbReference type="InterPro" id="IPR004154">
    <property type="entry name" value="Anticodon-bd"/>
</dbReference>
<dbReference type="InterPro" id="IPR036621">
    <property type="entry name" value="Anticodon-bd_dom_sf"/>
</dbReference>
<dbReference type="InterPro" id="IPR015807">
    <property type="entry name" value="His-tRNA-ligase"/>
</dbReference>
<dbReference type="InterPro" id="IPR041715">
    <property type="entry name" value="HisRS-like_core"/>
</dbReference>
<dbReference type="InterPro" id="IPR004516">
    <property type="entry name" value="HisRS/HisZ"/>
</dbReference>
<dbReference type="InterPro" id="IPR033656">
    <property type="entry name" value="HisRS_anticodon"/>
</dbReference>
<dbReference type="NCBIfam" id="TIGR00442">
    <property type="entry name" value="hisS"/>
    <property type="match status" value="1"/>
</dbReference>
<dbReference type="PANTHER" id="PTHR43707:SF1">
    <property type="entry name" value="HISTIDINE--TRNA LIGASE, MITOCHONDRIAL-RELATED"/>
    <property type="match status" value="1"/>
</dbReference>
<dbReference type="PANTHER" id="PTHR43707">
    <property type="entry name" value="HISTIDYL-TRNA SYNTHETASE"/>
    <property type="match status" value="1"/>
</dbReference>
<dbReference type="Pfam" id="PF03129">
    <property type="entry name" value="HGTP_anticodon"/>
    <property type="match status" value="1"/>
</dbReference>
<dbReference type="Pfam" id="PF13393">
    <property type="entry name" value="tRNA-synt_His"/>
    <property type="match status" value="1"/>
</dbReference>
<dbReference type="PIRSF" id="PIRSF001549">
    <property type="entry name" value="His-tRNA_synth"/>
    <property type="match status" value="1"/>
</dbReference>
<dbReference type="SUPFAM" id="SSF52954">
    <property type="entry name" value="Class II aaRS ABD-related"/>
    <property type="match status" value="1"/>
</dbReference>
<dbReference type="SUPFAM" id="SSF55681">
    <property type="entry name" value="Class II aaRS and biotin synthetases"/>
    <property type="match status" value="1"/>
</dbReference>
<dbReference type="PROSITE" id="PS50862">
    <property type="entry name" value="AA_TRNA_LIGASE_II"/>
    <property type="match status" value="1"/>
</dbReference>